<sequence>MTDLAQKELMVQLGRSFYERGYTVGGAGNLSVRLDDNRVLVTPTGSSLGRLSVERLSVLDMEGNLLGGDKPSKEAVFHLAMYKKNPECKAIVHLHSTYLTALSCLDNLDPNNAIEPFTPYYVMRVGKMQVIPYYRPGSPKIAEELSNRALTGKAFLLANHGVVVTGSDLLDAADNTEELEETAKLFFTLQGQKIRYLTDTEVKDLENRGK</sequence>
<name>OTNC_HAEIN</name>
<protein>
    <recommendedName>
        <fullName evidence="3">3-oxo-tetronate 4-phosphate decarboxylase</fullName>
        <ecNumber evidence="2">4.1.1.104</ecNumber>
    </recommendedName>
</protein>
<proteinExistence type="evidence at protein level"/>
<accession>Q57199</accession>
<accession>O05040</accession>
<keyword id="KW-0119">Carbohydrate metabolism</keyword>
<keyword id="KW-0456">Lyase</keyword>
<keyword id="KW-0479">Metal-binding</keyword>
<keyword id="KW-1185">Reference proteome</keyword>
<keyword id="KW-0862">Zinc</keyword>
<feature type="chain" id="PRO_0000162931" description="3-oxo-tetronate 4-phosphate decarboxylase">
    <location>
        <begin position="1"/>
        <end position="210"/>
    </location>
</feature>
<feature type="active site" description="Proton acceptor" evidence="1">
    <location>
        <position position="74"/>
    </location>
</feature>
<feature type="active site" description="Proton donor" evidence="1">
    <location>
        <position position="120"/>
    </location>
</feature>
<feature type="binding site" evidence="1">
    <location>
        <position position="74"/>
    </location>
    <ligand>
        <name>Zn(2+)</name>
        <dbReference type="ChEBI" id="CHEBI:29105"/>
    </ligand>
</feature>
<feature type="binding site" evidence="1">
    <location>
        <position position="93"/>
    </location>
    <ligand>
        <name>Zn(2+)</name>
        <dbReference type="ChEBI" id="CHEBI:29105"/>
    </ligand>
</feature>
<feature type="binding site" evidence="1">
    <location>
        <position position="95"/>
    </location>
    <ligand>
        <name>Zn(2+)</name>
        <dbReference type="ChEBI" id="CHEBI:29105"/>
    </ligand>
</feature>
<feature type="binding site" evidence="1">
    <location>
        <position position="160"/>
    </location>
    <ligand>
        <name>Zn(2+)</name>
        <dbReference type="ChEBI" id="CHEBI:29105"/>
    </ligand>
</feature>
<organism>
    <name type="scientific">Haemophilus influenzae (strain ATCC 51907 / DSM 11121 / KW20 / Rd)</name>
    <dbReference type="NCBI Taxonomy" id="71421"/>
    <lineage>
        <taxon>Bacteria</taxon>
        <taxon>Pseudomonadati</taxon>
        <taxon>Pseudomonadota</taxon>
        <taxon>Gammaproteobacteria</taxon>
        <taxon>Pasteurellales</taxon>
        <taxon>Pasteurellaceae</taxon>
        <taxon>Haemophilus</taxon>
    </lineage>
</organism>
<comment type="function">
    <text evidence="2">Catalyzes the decarboxylation of 3-oxo-tetronate 4-phosphate to dihydroxyacetone phosphate (DHAP) and CO(2).</text>
</comment>
<comment type="catalytic activity">
    <reaction evidence="2">
        <text>3-dehydro-4-O-phospho-D-erythronate + H(+) = dihydroxyacetone phosphate + CO2</text>
        <dbReference type="Rhea" id="RHEA:52416"/>
        <dbReference type="ChEBI" id="CHEBI:15378"/>
        <dbReference type="ChEBI" id="CHEBI:16526"/>
        <dbReference type="ChEBI" id="CHEBI:57642"/>
        <dbReference type="ChEBI" id="CHEBI:136593"/>
        <dbReference type="EC" id="4.1.1.104"/>
    </reaction>
</comment>
<comment type="catalytic activity">
    <reaction evidence="2">
        <text>3-dehydro-4-O-phospho-L-erythronate + H(+) = dihydroxyacetone phosphate + CO2</text>
        <dbReference type="Rhea" id="RHEA:52404"/>
        <dbReference type="ChEBI" id="CHEBI:15378"/>
        <dbReference type="ChEBI" id="CHEBI:16526"/>
        <dbReference type="ChEBI" id="CHEBI:57642"/>
        <dbReference type="ChEBI" id="CHEBI:136592"/>
        <dbReference type="EC" id="4.1.1.104"/>
    </reaction>
</comment>
<comment type="cofactor">
    <cofactor evidence="1">
        <name>Zn(2+)</name>
        <dbReference type="ChEBI" id="CHEBI:29105"/>
    </cofactor>
    <text evidence="1">Binds 1 zinc ion per subunit.</text>
</comment>
<comment type="similarity">
    <text evidence="4">Belongs to the aldolase class II family. AraD/FucA subfamily.</text>
</comment>
<evidence type="ECO:0000250" key="1">
    <source>
        <dbReference type="UniProtKB" id="P0AB87"/>
    </source>
</evidence>
<evidence type="ECO:0000269" key="2">
    <source>
    </source>
</evidence>
<evidence type="ECO:0000303" key="3">
    <source>
    </source>
</evidence>
<evidence type="ECO:0000305" key="4"/>
<reference key="1">
    <citation type="journal article" date="1995" name="Science">
        <title>Whole-genome random sequencing and assembly of Haemophilus influenzae Rd.</title>
        <authorList>
            <person name="Fleischmann R.D."/>
            <person name="Adams M.D."/>
            <person name="White O."/>
            <person name="Clayton R.A."/>
            <person name="Kirkness E.F."/>
            <person name="Kerlavage A.R."/>
            <person name="Bult C.J."/>
            <person name="Tomb J.-F."/>
            <person name="Dougherty B.A."/>
            <person name="Merrick J.M."/>
            <person name="McKenney K."/>
            <person name="Sutton G.G."/>
            <person name="FitzHugh W."/>
            <person name="Fields C.A."/>
            <person name="Gocayne J.D."/>
            <person name="Scott J.D."/>
            <person name="Shirley R."/>
            <person name="Liu L.-I."/>
            <person name="Glodek A."/>
            <person name="Kelley J.M."/>
            <person name="Weidman J.F."/>
            <person name="Phillips C.A."/>
            <person name="Spriggs T."/>
            <person name="Hedblom E."/>
            <person name="Cotton M.D."/>
            <person name="Utterback T.R."/>
            <person name="Hanna M.C."/>
            <person name="Nguyen D.T."/>
            <person name="Saudek D.M."/>
            <person name="Brandon R.C."/>
            <person name="Fine L.D."/>
            <person name="Fritchman J.L."/>
            <person name="Fuhrmann J.L."/>
            <person name="Geoghagen N.S.M."/>
            <person name="Gnehm C.L."/>
            <person name="McDonald L.A."/>
            <person name="Small K.V."/>
            <person name="Fraser C.M."/>
            <person name="Smith H.O."/>
            <person name="Venter J.C."/>
        </authorList>
    </citation>
    <scope>NUCLEOTIDE SEQUENCE [LARGE SCALE GENOMIC DNA]</scope>
    <source>
        <strain>ATCC 51907 / DSM 11121 / KW20 / Rd</strain>
    </source>
</reference>
<reference key="2">
    <citation type="journal article" date="2016" name="Proc. Natl. Acad. Sci. U.S.A.">
        <title>Assignment of function to a domain of unknown function: DUF1537 is a new kinase family in catabolic pathways for acid sugars.</title>
        <authorList>
            <person name="Zhang X."/>
            <person name="Carter M.S."/>
            <person name="Vetting M.W."/>
            <person name="San Francisco B."/>
            <person name="Zhao S."/>
            <person name="Al-Obaidi N.F."/>
            <person name="Solbiati J.O."/>
            <person name="Thiaville J.J."/>
            <person name="de Crecy-Lagard V."/>
            <person name="Jacobson M.P."/>
            <person name="Almo S.C."/>
            <person name="Gerlt J.A."/>
        </authorList>
    </citation>
    <scope>FUNCTION</scope>
    <scope>CATALYTIC ACTIVITY</scope>
    <source>
        <strain>ATCC 51907 / DSM 11121 / KW20 / Rd</strain>
    </source>
</reference>
<gene>
    <name evidence="3" type="primary">otnC</name>
    <name type="ordered locus">HI_1012</name>
</gene>
<dbReference type="EC" id="4.1.1.104" evidence="2"/>
<dbReference type="EMBL" id="L42023">
    <property type="protein sequence ID" value="AAC22673.1"/>
    <property type="molecule type" value="Genomic_DNA"/>
</dbReference>
<dbReference type="PIR" id="B64108">
    <property type="entry name" value="B64108"/>
</dbReference>
<dbReference type="RefSeq" id="NP_439173.1">
    <property type="nucleotide sequence ID" value="NC_000907.1"/>
</dbReference>
<dbReference type="SMR" id="Q57199"/>
<dbReference type="STRING" id="71421.HI_1012"/>
<dbReference type="EnsemblBacteria" id="AAC22673">
    <property type="protein sequence ID" value="AAC22673"/>
    <property type="gene ID" value="HI_1012"/>
</dbReference>
<dbReference type="KEGG" id="hin:HI_1012"/>
<dbReference type="PATRIC" id="fig|71421.8.peg.1056"/>
<dbReference type="eggNOG" id="COG0235">
    <property type="taxonomic scope" value="Bacteria"/>
</dbReference>
<dbReference type="HOGENOM" id="CLU_006033_3_2_6"/>
<dbReference type="OrthoDB" id="5500703at2"/>
<dbReference type="PhylomeDB" id="Q57199"/>
<dbReference type="BioCyc" id="HINF71421:G1GJ1-1052-MONOMER"/>
<dbReference type="BioCyc" id="MetaCyc:MONOMER-20188"/>
<dbReference type="BRENDA" id="4.1.1.104">
    <property type="organism ID" value="2529"/>
</dbReference>
<dbReference type="Proteomes" id="UP000000579">
    <property type="component" value="Chromosome"/>
</dbReference>
<dbReference type="GO" id="GO:0005829">
    <property type="term" value="C:cytosol"/>
    <property type="evidence" value="ECO:0000318"/>
    <property type="project" value="GO_Central"/>
</dbReference>
<dbReference type="GO" id="GO:0016832">
    <property type="term" value="F:aldehyde-lyase activity"/>
    <property type="evidence" value="ECO:0000318"/>
    <property type="project" value="GO_Central"/>
</dbReference>
<dbReference type="GO" id="GO:0046872">
    <property type="term" value="F:metal ion binding"/>
    <property type="evidence" value="ECO:0007669"/>
    <property type="project" value="UniProtKB-KW"/>
</dbReference>
<dbReference type="GO" id="GO:0019323">
    <property type="term" value="P:pentose catabolic process"/>
    <property type="evidence" value="ECO:0000318"/>
    <property type="project" value="GO_Central"/>
</dbReference>
<dbReference type="FunFam" id="3.40.225.10:FF:000008">
    <property type="entry name" value="Sugar aldolase"/>
    <property type="match status" value="1"/>
</dbReference>
<dbReference type="Gene3D" id="3.40.225.10">
    <property type="entry name" value="Class II aldolase/adducin N-terminal domain"/>
    <property type="match status" value="1"/>
</dbReference>
<dbReference type="InterPro" id="IPR050197">
    <property type="entry name" value="Aldolase_class_II_sugar_metab"/>
</dbReference>
<dbReference type="InterPro" id="IPR001303">
    <property type="entry name" value="Aldolase_II/adducin_N"/>
</dbReference>
<dbReference type="InterPro" id="IPR036409">
    <property type="entry name" value="Aldolase_II/adducin_N_sf"/>
</dbReference>
<dbReference type="InterPro" id="IPR050013">
    <property type="entry name" value="OtnC"/>
</dbReference>
<dbReference type="NCBIfam" id="NF043034">
    <property type="entry name" value="OxoTetrPhDc"/>
    <property type="match status" value="1"/>
</dbReference>
<dbReference type="NCBIfam" id="NF006000">
    <property type="entry name" value="PRK08130.1"/>
    <property type="match status" value="1"/>
</dbReference>
<dbReference type="PANTHER" id="PTHR22789:SF0">
    <property type="entry name" value="3-OXO-TETRONATE 4-PHOSPHATE DECARBOXYLASE-RELATED"/>
    <property type="match status" value="1"/>
</dbReference>
<dbReference type="PANTHER" id="PTHR22789">
    <property type="entry name" value="FUCULOSE PHOSPHATE ALDOLASE"/>
    <property type="match status" value="1"/>
</dbReference>
<dbReference type="Pfam" id="PF00596">
    <property type="entry name" value="Aldolase_II"/>
    <property type="match status" value="1"/>
</dbReference>
<dbReference type="SMART" id="SM01007">
    <property type="entry name" value="Aldolase_II"/>
    <property type="match status" value="1"/>
</dbReference>
<dbReference type="SUPFAM" id="SSF53639">
    <property type="entry name" value="AraD/HMP-PK domain-like"/>
    <property type="match status" value="1"/>
</dbReference>